<organism>
    <name type="scientific">Nocardia farcinica (strain IFM 10152)</name>
    <dbReference type="NCBI Taxonomy" id="247156"/>
    <lineage>
        <taxon>Bacteria</taxon>
        <taxon>Bacillati</taxon>
        <taxon>Actinomycetota</taxon>
        <taxon>Actinomycetes</taxon>
        <taxon>Mycobacteriales</taxon>
        <taxon>Nocardiaceae</taxon>
        <taxon>Nocardia</taxon>
    </lineage>
</organism>
<gene>
    <name evidence="1" type="primary">uvrC</name>
    <name type="ordered locus">NFA_35940</name>
</gene>
<protein>
    <recommendedName>
        <fullName evidence="1">UvrABC system protein C</fullName>
        <shortName evidence="1">Protein UvrC</shortName>
    </recommendedName>
    <alternativeName>
        <fullName evidence="1">Excinuclease ABC subunit C</fullName>
    </alternativeName>
</protein>
<feature type="chain" id="PRO_0000227452" description="UvrABC system protein C">
    <location>
        <begin position="1"/>
        <end position="673"/>
    </location>
</feature>
<feature type="domain" description="GIY-YIG" evidence="1">
    <location>
        <begin position="16"/>
        <end position="95"/>
    </location>
</feature>
<feature type="domain" description="UVR" evidence="1">
    <location>
        <begin position="208"/>
        <end position="243"/>
    </location>
</feature>
<feature type="region of interest" description="Disordered" evidence="2">
    <location>
        <begin position="488"/>
        <end position="526"/>
    </location>
</feature>
<keyword id="KW-0963">Cytoplasm</keyword>
<keyword id="KW-0227">DNA damage</keyword>
<keyword id="KW-0228">DNA excision</keyword>
<keyword id="KW-0234">DNA repair</keyword>
<keyword id="KW-0267">Excision nuclease</keyword>
<keyword id="KW-1185">Reference proteome</keyword>
<keyword id="KW-0742">SOS response</keyword>
<comment type="function">
    <text evidence="1">The UvrABC repair system catalyzes the recognition and processing of DNA lesions. UvrC both incises the 5' and 3' sides of the lesion. The N-terminal half is responsible for the 3' incision and the C-terminal half is responsible for the 5' incision.</text>
</comment>
<comment type="subunit">
    <text evidence="1">Interacts with UvrB in an incision complex.</text>
</comment>
<comment type="subcellular location">
    <subcellularLocation>
        <location evidence="1">Cytoplasm</location>
    </subcellularLocation>
</comment>
<comment type="similarity">
    <text evidence="1">Belongs to the UvrC family.</text>
</comment>
<name>UVRC_NOCFA</name>
<reference key="1">
    <citation type="journal article" date="2004" name="Proc. Natl. Acad. Sci. U.S.A.">
        <title>The complete genomic sequence of Nocardia farcinica IFM 10152.</title>
        <authorList>
            <person name="Ishikawa J."/>
            <person name="Yamashita A."/>
            <person name="Mikami Y."/>
            <person name="Hoshino Y."/>
            <person name="Kurita H."/>
            <person name="Hotta K."/>
            <person name="Shiba T."/>
            <person name="Hattori M."/>
        </authorList>
    </citation>
    <scope>NUCLEOTIDE SEQUENCE [LARGE SCALE GENOMIC DNA]</scope>
    <source>
        <strain>IFM 10152</strain>
    </source>
</reference>
<proteinExistence type="inferred from homology"/>
<accession>Q5YTP9</accession>
<dbReference type="EMBL" id="AP006618">
    <property type="protein sequence ID" value="BAD58442.1"/>
    <property type="molecule type" value="Genomic_DNA"/>
</dbReference>
<dbReference type="RefSeq" id="WP_011210127.1">
    <property type="nucleotide sequence ID" value="NC_006361.1"/>
</dbReference>
<dbReference type="SMR" id="Q5YTP9"/>
<dbReference type="STRING" id="247156.NFA_35940"/>
<dbReference type="GeneID" id="61134290"/>
<dbReference type="KEGG" id="nfa:NFA_35940"/>
<dbReference type="eggNOG" id="COG0322">
    <property type="taxonomic scope" value="Bacteria"/>
</dbReference>
<dbReference type="HOGENOM" id="CLU_014841_3_2_11"/>
<dbReference type="OrthoDB" id="9804933at2"/>
<dbReference type="Proteomes" id="UP000006820">
    <property type="component" value="Chromosome"/>
</dbReference>
<dbReference type="GO" id="GO:0005737">
    <property type="term" value="C:cytoplasm"/>
    <property type="evidence" value="ECO:0007669"/>
    <property type="project" value="UniProtKB-SubCell"/>
</dbReference>
<dbReference type="GO" id="GO:0009380">
    <property type="term" value="C:excinuclease repair complex"/>
    <property type="evidence" value="ECO:0007669"/>
    <property type="project" value="InterPro"/>
</dbReference>
<dbReference type="GO" id="GO:0003677">
    <property type="term" value="F:DNA binding"/>
    <property type="evidence" value="ECO:0007669"/>
    <property type="project" value="UniProtKB-UniRule"/>
</dbReference>
<dbReference type="GO" id="GO:0009381">
    <property type="term" value="F:excinuclease ABC activity"/>
    <property type="evidence" value="ECO:0007669"/>
    <property type="project" value="UniProtKB-UniRule"/>
</dbReference>
<dbReference type="GO" id="GO:0006289">
    <property type="term" value="P:nucleotide-excision repair"/>
    <property type="evidence" value="ECO:0007669"/>
    <property type="project" value="UniProtKB-UniRule"/>
</dbReference>
<dbReference type="GO" id="GO:0009432">
    <property type="term" value="P:SOS response"/>
    <property type="evidence" value="ECO:0007669"/>
    <property type="project" value="UniProtKB-UniRule"/>
</dbReference>
<dbReference type="CDD" id="cd10434">
    <property type="entry name" value="GIY-YIG_UvrC_Cho"/>
    <property type="match status" value="1"/>
</dbReference>
<dbReference type="FunFam" id="3.40.1440.10:FF:000001">
    <property type="entry name" value="UvrABC system protein C"/>
    <property type="match status" value="1"/>
</dbReference>
<dbReference type="Gene3D" id="1.10.150.20">
    <property type="entry name" value="5' to 3' exonuclease, C-terminal subdomain"/>
    <property type="match status" value="1"/>
</dbReference>
<dbReference type="Gene3D" id="3.40.1440.10">
    <property type="entry name" value="GIY-YIG endonuclease"/>
    <property type="match status" value="1"/>
</dbReference>
<dbReference type="Gene3D" id="4.10.860.10">
    <property type="entry name" value="UVR domain"/>
    <property type="match status" value="1"/>
</dbReference>
<dbReference type="Gene3D" id="3.30.420.340">
    <property type="entry name" value="UvrC, RNAse H endonuclease domain"/>
    <property type="match status" value="1"/>
</dbReference>
<dbReference type="HAMAP" id="MF_00203">
    <property type="entry name" value="UvrC"/>
    <property type="match status" value="1"/>
</dbReference>
<dbReference type="InterPro" id="IPR000305">
    <property type="entry name" value="GIY-YIG_endonuc"/>
</dbReference>
<dbReference type="InterPro" id="IPR035901">
    <property type="entry name" value="GIY-YIG_endonuc_sf"/>
</dbReference>
<dbReference type="InterPro" id="IPR047296">
    <property type="entry name" value="GIY-YIG_UvrC_Cho"/>
</dbReference>
<dbReference type="InterPro" id="IPR003583">
    <property type="entry name" value="Hlx-hairpin-Hlx_DNA-bd_motif"/>
</dbReference>
<dbReference type="InterPro" id="IPR010994">
    <property type="entry name" value="RuvA_2-like"/>
</dbReference>
<dbReference type="InterPro" id="IPR001943">
    <property type="entry name" value="UVR_dom"/>
</dbReference>
<dbReference type="InterPro" id="IPR036876">
    <property type="entry name" value="UVR_dom_sf"/>
</dbReference>
<dbReference type="InterPro" id="IPR050066">
    <property type="entry name" value="UvrABC_protein_C"/>
</dbReference>
<dbReference type="InterPro" id="IPR004791">
    <property type="entry name" value="UvrC"/>
</dbReference>
<dbReference type="InterPro" id="IPR001162">
    <property type="entry name" value="UvrC_RNase_H_dom"/>
</dbReference>
<dbReference type="InterPro" id="IPR038476">
    <property type="entry name" value="UvrC_RNase_H_dom_sf"/>
</dbReference>
<dbReference type="NCBIfam" id="NF001824">
    <property type="entry name" value="PRK00558.1-5"/>
    <property type="match status" value="1"/>
</dbReference>
<dbReference type="NCBIfam" id="TIGR00194">
    <property type="entry name" value="uvrC"/>
    <property type="match status" value="1"/>
</dbReference>
<dbReference type="PANTHER" id="PTHR30562:SF1">
    <property type="entry name" value="UVRABC SYSTEM PROTEIN C"/>
    <property type="match status" value="1"/>
</dbReference>
<dbReference type="PANTHER" id="PTHR30562">
    <property type="entry name" value="UVRC/OXIDOREDUCTASE"/>
    <property type="match status" value="1"/>
</dbReference>
<dbReference type="Pfam" id="PF01541">
    <property type="entry name" value="GIY-YIG"/>
    <property type="match status" value="1"/>
</dbReference>
<dbReference type="Pfam" id="PF14520">
    <property type="entry name" value="HHH_5"/>
    <property type="match status" value="1"/>
</dbReference>
<dbReference type="Pfam" id="PF02151">
    <property type="entry name" value="UVR"/>
    <property type="match status" value="1"/>
</dbReference>
<dbReference type="Pfam" id="PF22920">
    <property type="entry name" value="UvrC_RNaseH"/>
    <property type="match status" value="1"/>
</dbReference>
<dbReference type="Pfam" id="PF08459">
    <property type="entry name" value="UvrC_RNaseH_dom"/>
    <property type="match status" value="1"/>
</dbReference>
<dbReference type="SMART" id="SM00465">
    <property type="entry name" value="GIYc"/>
    <property type="match status" value="1"/>
</dbReference>
<dbReference type="SMART" id="SM00278">
    <property type="entry name" value="HhH1"/>
    <property type="match status" value="2"/>
</dbReference>
<dbReference type="SUPFAM" id="SSF46600">
    <property type="entry name" value="C-terminal UvrC-binding domain of UvrB"/>
    <property type="match status" value="1"/>
</dbReference>
<dbReference type="SUPFAM" id="SSF82771">
    <property type="entry name" value="GIY-YIG endonuclease"/>
    <property type="match status" value="1"/>
</dbReference>
<dbReference type="SUPFAM" id="SSF47781">
    <property type="entry name" value="RuvA domain 2-like"/>
    <property type="match status" value="1"/>
</dbReference>
<dbReference type="PROSITE" id="PS50164">
    <property type="entry name" value="GIY_YIG"/>
    <property type="match status" value="1"/>
</dbReference>
<dbReference type="PROSITE" id="PS50151">
    <property type="entry name" value="UVR"/>
    <property type="match status" value="1"/>
</dbReference>
<dbReference type="PROSITE" id="PS50165">
    <property type="entry name" value="UVRC"/>
    <property type="match status" value="1"/>
</dbReference>
<sequence>MADPATYRPAPGTIPVEPGVYKFRDSYGRVIYVGKAKSLRSRLNSYFADVASLHPRTKQMVTTAASVEWTVVSTEVEALQLEYNWIKEFDPRFNVRYRDDKSYPVLAVTLNEEYPRLFVYRGARKKGVRYFGPYAHAWAIRETLDLLLRVFPARTCSTGVFKRHNQIGRPCLLGYIDKCSAPCVGRVSAEEHRAIVEDFCDFLAGRTDKMVRELERRMHAAAEDLDFETAARLRDDVQALRRALEKQAVVLGTGTDADVIAFATDELEVAVQIFHVRDGRVRGQRGWVVDKSGDAVDSGTGDDETGALVEQFLTQFYGEQVAYADQTPDEQPATVVPREVLVPQLPAGHEQLQEWLSRLRGSAVRLRVPQRGDKKALAETVERNAKEALAQHKLKRAGDLTSRSAALQDIQDALDLDSAPLRIECVDISHVQGTDVVASLVVFEDGLPRKSDYRHYAIKEAAGEGRSDDVGSIAEVTRRRFYRLRKERDEAERDELDGTAAGAPLVDDDETPTSRPGIDPTTGRPRKFAYPPNLYVVDGGAPQVAAAAEVLDELGITDVAVIGLAKRLEEVWVPGEPDPVILPRNSEALFLLQRVRDEAHRFAITFHRSKRSRRMTASALDSVRGLGAARRTALVTHFGSVAKLKEATVEEITEVPGIGVATAKAVLAALHQE</sequence>
<evidence type="ECO:0000255" key="1">
    <source>
        <dbReference type="HAMAP-Rule" id="MF_00203"/>
    </source>
</evidence>
<evidence type="ECO:0000256" key="2">
    <source>
        <dbReference type="SAM" id="MobiDB-lite"/>
    </source>
</evidence>